<gene>
    <name type="primary">DMT105</name>
</gene>
<feature type="chain" id="PRO_0000246696" description="DNA (cytosine-5)-methyltransferase 3">
    <location>
        <begin position="1"/>
        <end position="915"/>
    </location>
</feature>
<feature type="domain" description="BAH" evidence="3">
    <location>
        <begin position="188"/>
        <end position="313"/>
    </location>
</feature>
<feature type="domain" description="SAM-dependent MTase C5-type" evidence="4">
    <location>
        <begin position="345"/>
        <end position="876"/>
    </location>
</feature>
<feature type="domain" description="Chromo" evidence="2">
    <location>
        <begin position="445"/>
        <end position="508"/>
    </location>
</feature>
<feature type="region of interest" description="Disordered" evidence="6">
    <location>
        <begin position="1"/>
        <end position="107"/>
    </location>
</feature>
<feature type="region of interest" description="Disordered" evidence="6">
    <location>
        <begin position="152"/>
        <end position="171"/>
    </location>
</feature>
<feature type="region of interest" description="Disordered" evidence="6">
    <location>
        <begin position="315"/>
        <end position="338"/>
    </location>
</feature>
<feature type="compositionally biased region" description="Low complexity" evidence="6">
    <location>
        <begin position="1"/>
        <end position="14"/>
    </location>
</feature>
<feature type="compositionally biased region" description="Basic and acidic residues" evidence="6">
    <location>
        <begin position="21"/>
        <end position="30"/>
    </location>
</feature>
<feature type="compositionally biased region" description="Basic residues" evidence="6">
    <location>
        <begin position="42"/>
        <end position="57"/>
    </location>
</feature>
<feature type="compositionally biased region" description="Basic and acidic residues" evidence="6">
    <location>
        <begin position="71"/>
        <end position="80"/>
    </location>
</feature>
<feature type="compositionally biased region" description="Acidic residues" evidence="6">
    <location>
        <begin position="81"/>
        <end position="107"/>
    </location>
</feature>
<feature type="compositionally biased region" description="Polar residues" evidence="6">
    <location>
        <begin position="315"/>
        <end position="328"/>
    </location>
</feature>
<feature type="active site" evidence="4 5">
    <location>
        <position position="521"/>
    </location>
</feature>
<dbReference type="EC" id="2.1.1.37"/>
<dbReference type="EMBL" id="AY093416">
    <property type="protein sequence ID" value="AAM28227.1"/>
    <property type="molecule type" value="mRNA"/>
</dbReference>
<dbReference type="RefSeq" id="NP_001105167.2">
    <property type="nucleotide sequence ID" value="NM_001111697.2"/>
</dbReference>
<dbReference type="SMR" id="Q8LPU5"/>
<dbReference type="FunCoup" id="Q8LPU5">
    <property type="interactions" value="631"/>
</dbReference>
<dbReference type="STRING" id="4577.Q8LPU5"/>
<dbReference type="REBASE" id="5016">
    <property type="entry name" value="M.ZmaV"/>
</dbReference>
<dbReference type="PaxDb" id="4577-GRMZM2G005310_P02"/>
<dbReference type="GeneID" id="542060"/>
<dbReference type="KEGG" id="zma:542060"/>
<dbReference type="eggNOG" id="ENOG502QW29">
    <property type="taxonomic scope" value="Eukaryota"/>
</dbReference>
<dbReference type="InParanoid" id="Q8LPU5"/>
<dbReference type="OrthoDB" id="5376140at2759"/>
<dbReference type="Proteomes" id="UP000007305">
    <property type="component" value="Unplaced"/>
</dbReference>
<dbReference type="ExpressionAtlas" id="Q8LPU5">
    <property type="expression patterns" value="baseline and differential"/>
</dbReference>
<dbReference type="GO" id="GO:0005634">
    <property type="term" value="C:nucleus"/>
    <property type="evidence" value="ECO:0000318"/>
    <property type="project" value="GO_Central"/>
</dbReference>
<dbReference type="GO" id="GO:0003682">
    <property type="term" value="F:chromatin binding"/>
    <property type="evidence" value="ECO:0007669"/>
    <property type="project" value="InterPro"/>
</dbReference>
<dbReference type="GO" id="GO:0003886">
    <property type="term" value="F:DNA (cytosine-5-)-methyltransferase activity"/>
    <property type="evidence" value="ECO:0000318"/>
    <property type="project" value="GO_Central"/>
</dbReference>
<dbReference type="GO" id="GO:0003677">
    <property type="term" value="F:DNA binding"/>
    <property type="evidence" value="ECO:0000318"/>
    <property type="project" value="GO_Central"/>
</dbReference>
<dbReference type="GO" id="GO:0032259">
    <property type="term" value="P:methylation"/>
    <property type="evidence" value="ECO:0007669"/>
    <property type="project" value="UniProtKB-KW"/>
</dbReference>
<dbReference type="GO" id="GO:0044027">
    <property type="term" value="P:negative regulation of gene expression via chromosomal CpG island methylation"/>
    <property type="evidence" value="ECO:0000318"/>
    <property type="project" value="GO_Central"/>
</dbReference>
<dbReference type="CDD" id="cd04716">
    <property type="entry name" value="BAH_plantDCM_I"/>
    <property type="match status" value="1"/>
</dbReference>
<dbReference type="CDD" id="cd18635">
    <property type="entry name" value="CD_CMT3_like"/>
    <property type="match status" value="1"/>
</dbReference>
<dbReference type="FunFam" id="2.30.30.490:FF:000011">
    <property type="entry name" value="DNA (cytosine-5)-methyltransferase 1"/>
    <property type="match status" value="1"/>
</dbReference>
<dbReference type="FunFam" id="3.40.50.150:FF:000143">
    <property type="entry name" value="DNA (cytosine-5)-methyltransferase 1"/>
    <property type="match status" value="1"/>
</dbReference>
<dbReference type="FunFam" id="3.90.120.10:FF:000003">
    <property type="entry name" value="DNA (cytosine-5)-methyltransferase 1"/>
    <property type="match status" value="1"/>
</dbReference>
<dbReference type="Gene3D" id="2.30.30.490">
    <property type="match status" value="1"/>
</dbReference>
<dbReference type="Gene3D" id="3.90.120.10">
    <property type="entry name" value="DNA Methylase, subunit A, domain 2"/>
    <property type="match status" value="1"/>
</dbReference>
<dbReference type="Gene3D" id="3.40.50.150">
    <property type="entry name" value="Vaccinia Virus protein VP39"/>
    <property type="match status" value="1"/>
</dbReference>
<dbReference type="InterPro" id="IPR001025">
    <property type="entry name" value="BAH_dom"/>
</dbReference>
<dbReference type="InterPro" id="IPR043151">
    <property type="entry name" value="BAH_sf"/>
</dbReference>
<dbReference type="InterPro" id="IPR050390">
    <property type="entry name" value="C5-Methyltransferase"/>
</dbReference>
<dbReference type="InterPro" id="IPR018117">
    <property type="entry name" value="C5_DNA_meth_AS"/>
</dbReference>
<dbReference type="InterPro" id="IPR001525">
    <property type="entry name" value="C5_MeTfrase"/>
</dbReference>
<dbReference type="InterPro" id="IPR016197">
    <property type="entry name" value="Chromo-like_dom_sf"/>
</dbReference>
<dbReference type="InterPro" id="IPR000953">
    <property type="entry name" value="Chromo/chromo_shadow_dom"/>
</dbReference>
<dbReference type="InterPro" id="IPR023780">
    <property type="entry name" value="Chromo_domain"/>
</dbReference>
<dbReference type="InterPro" id="IPR029063">
    <property type="entry name" value="SAM-dependent_MTases_sf"/>
</dbReference>
<dbReference type="PANTHER" id="PTHR10629">
    <property type="entry name" value="CYTOSINE-SPECIFIC METHYLTRANSFERASE"/>
    <property type="match status" value="1"/>
</dbReference>
<dbReference type="PANTHER" id="PTHR10629:SF50">
    <property type="entry name" value="DNA (CYTOSINE-5)-METHYLTRANSFERASE CMT3"/>
    <property type="match status" value="1"/>
</dbReference>
<dbReference type="Pfam" id="PF01426">
    <property type="entry name" value="BAH"/>
    <property type="match status" value="1"/>
</dbReference>
<dbReference type="Pfam" id="PF00385">
    <property type="entry name" value="Chromo"/>
    <property type="match status" value="1"/>
</dbReference>
<dbReference type="Pfam" id="PF00145">
    <property type="entry name" value="DNA_methylase"/>
    <property type="match status" value="1"/>
</dbReference>
<dbReference type="PRINTS" id="PR00105">
    <property type="entry name" value="C5METTRFRASE"/>
</dbReference>
<dbReference type="SMART" id="SM00439">
    <property type="entry name" value="BAH"/>
    <property type="match status" value="1"/>
</dbReference>
<dbReference type="SMART" id="SM00298">
    <property type="entry name" value="CHROMO"/>
    <property type="match status" value="1"/>
</dbReference>
<dbReference type="SUPFAM" id="SSF54160">
    <property type="entry name" value="Chromo domain-like"/>
    <property type="match status" value="1"/>
</dbReference>
<dbReference type="SUPFAM" id="SSF53335">
    <property type="entry name" value="S-adenosyl-L-methionine-dependent methyltransferases"/>
    <property type="match status" value="1"/>
</dbReference>
<dbReference type="PROSITE" id="PS51038">
    <property type="entry name" value="BAH"/>
    <property type="match status" value="1"/>
</dbReference>
<dbReference type="PROSITE" id="PS00094">
    <property type="entry name" value="C5_MTASE_1"/>
    <property type="match status" value="1"/>
</dbReference>
<dbReference type="PROSITE" id="PS50013">
    <property type="entry name" value="CHROMO_2"/>
    <property type="match status" value="1"/>
</dbReference>
<dbReference type="PROSITE" id="PS51679">
    <property type="entry name" value="SAM_MT_C5"/>
    <property type="match status" value="1"/>
</dbReference>
<accession>Q8LPU5</accession>
<name>CMT3_MAIZE</name>
<organism>
    <name type="scientific">Zea mays</name>
    <name type="common">Maize</name>
    <dbReference type="NCBI Taxonomy" id="4577"/>
    <lineage>
        <taxon>Eukaryota</taxon>
        <taxon>Viridiplantae</taxon>
        <taxon>Streptophyta</taxon>
        <taxon>Embryophyta</taxon>
        <taxon>Tracheophyta</taxon>
        <taxon>Spermatophyta</taxon>
        <taxon>Magnoliopsida</taxon>
        <taxon>Liliopsida</taxon>
        <taxon>Poales</taxon>
        <taxon>Poaceae</taxon>
        <taxon>PACMAD clade</taxon>
        <taxon>Panicoideae</taxon>
        <taxon>Andropogonodae</taxon>
        <taxon>Andropogoneae</taxon>
        <taxon>Tripsacinae</taxon>
        <taxon>Zea</taxon>
    </lineage>
</organism>
<keyword id="KW-0156">Chromatin regulator</keyword>
<keyword id="KW-0238">DNA-binding</keyword>
<keyword id="KW-0489">Methyltransferase</keyword>
<keyword id="KW-0539">Nucleus</keyword>
<keyword id="KW-1185">Reference proteome</keyword>
<keyword id="KW-0949">S-adenosyl-L-methionine</keyword>
<keyword id="KW-0804">Transcription</keyword>
<keyword id="KW-0805">Transcription regulation</keyword>
<keyword id="KW-0808">Transferase</keyword>
<evidence type="ECO:0000250" key="1"/>
<evidence type="ECO:0000255" key="2">
    <source>
        <dbReference type="PROSITE-ProRule" id="PRU00053"/>
    </source>
</evidence>
<evidence type="ECO:0000255" key="3">
    <source>
        <dbReference type="PROSITE-ProRule" id="PRU00370"/>
    </source>
</evidence>
<evidence type="ECO:0000255" key="4">
    <source>
        <dbReference type="PROSITE-ProRule" id="PRU01016"/>
    </source>
</evidence>
<evidence type="ECO:0000255" key="5">
    <source>
        <dbReference type="PROSITE-ProRule" id="PRU10018"/>
    </source>
</evidence>
<evidence type="ECO:0000256" key="6">
    <source>
        <dbReference type="SAM" id="MobiDB-lite"/>
    </source>
</evidence>
<reference key="1">
    <citation type="submission" date="2002-05" db="EMBL/GenBank/DDBJ databases">
        <title>Sequences from the plant chromatin consortium.</title>
        <authorList>
            <person name="Chandler V.L."/>
            <person name="Kaeppler S.M."/>
            <person name="Kaeppler H.F."/>
            <person name="Cone K.C."/>
        </authorList>
    </citation>
    <scope>NUCLEOTIDE SEQUENCE [MRNA]</scope>
</reference>
<reference key="2">
    <citation type="submission" date="2002-03" db="EMBL/GenBank/DDBJ databases">
        <authorList>
            <person name="Bergstrom D."/>
            <person name="Springer N.M."/>
            <person name="Schmitt L.T."/>
            <person name="Guthrie E."/>
            <person name="Sidorenko L."/>
            <person name="Selinger D."/>
            <person name="Kaeppler S.M."/>
            <person name="Cone K.C."/>
        </authorList>
    </citation>
    <scope>NUCLEOTIDE SEQUENCE [MRNA]</scope>
</reference>
<sequence>MAPSSPSSARPTRASGRKRSAMAEEIHQNQEEEEEVVAASTAKRRRKAASSGKKPKPTPKQAKPAVAGMKKKGETEKTEPVVDDVCAEEPDEEELAMGEEEAEAEEQAMQEVVAAVAAGSPGKKRVGRRSAAASGDHVPEFIGSPVAAAEAHSNWPKRYERSTAANKPEEDDELKARCHYRSAKVDNIVYCLGDDVYVKAGENEADYIGRITEFFEGTDRCHYFTCRWFFRAEDTVINSLVSINVDGHKHDPRRVFLSEEKNDNVLDCIISKVKIVHVDPNMDPKAKAQLIEHCDLYYDMSYSVAYSTFANISSENGQSGSETASGISSDDAGLETSSNMPERTATLLDLYSGCGGMSTGLCLGAALSGLKLETRWAVDLNSFACQSLKYNHPQTEVRNEKADEFLALLKEWAVLCEKYVHQDVDSNLAGSEDQEDADTLDKDEFVVQKLIGIRYDGTGRKKGVYFKVQWEGYGPEEDTWEPIDNLSDCPLKIREFVQEGRKRKILPLPGDVDVICGGPPCQGISGFNRFRNRDEPLKDEKNKQMVTFMDIVAYLKPKYVLMENVVDILKFADGYLGKYALSCLVAMKYQARLGMMVAGCYGLPQFRMRVFLWGALSSMVLPKYPLPTYDVVVRGGAPNAFSQCMVAYDETQRPSLKKALLLGDAFSDLPKVENHQPNDVMEYGGSPKTEFQRYIRLGRKDMLDWSFGEEAGPDEGKLLDHQPLRLNNDDYERVKQIPVKKGANFRDLKGVKVGANNVVEWDPEVERVYLSSGKPLVPDYAMSFIKGKSLKPFGRLWWDETVPTVVTRAEPHNQVILHPTQARVLTIRENARLQGFPDYYRLFGPIKEKYIQVGNAVAVPVARALGYCLGQAYLGESDGSQPLYQLPASFTSVGRTAVQANAVSVGTPAGEVVEQ</sequence>
<protein>
    <recommendedName>
        <fullName>DNA (cytosine-5)-methyltransferase 3</fullName>
        <ecNumber>2.1.1.37</ecNumber>
    </recommendedName>
    <alternativeName>
        <fullName>Chromomethylase 3</fullName>
    </alternativeName>
    <alternativeName>
        <fullName>DNA methyltransferase 105</fullName>
    </alternativeName>
</protein>
<proteinExistence type="evidence at transcript level"/>
<comment type="function">
    <text evidence="1">May be involved in the CpXpG methylation and in gene silencing.</text>
</comment>
<comment type="catalytic activity">
    <reaction evidence="5">
        <text>a 2'-deoxycytidine in DNA + S-adenosyl-L-methionine = a 5-methyl-2'-deoxycytidine in DNA + S-adenosyl-L-homocysteine + H(+)</text>
        <dbReference type="Rhea" id="RHEA:13681"/>
        <dbReference type="Rhea" id="RHEA-COMP:11369"/>
        <dbReference type="Rhea" id="RHEA-COMP:11370"/>
        <dbReference type="ChEBI" id="CHEBI:15378"/>
        <dbReference type="ChEBI" id="CHEBI:57856"/>
        <dbReference type="ChEBI" id="CHEBI:59789"/>
        <dbReference type="ChEBI" id="CHEBI:85452"/>
        <dbReference type="ChEBI" id="CHEBI:85454"/>
        <dbReference type="EC" id="2.1.1.37"/>
    </reaction>
</comment>
<comment type="subcellular location">
    <subcellularLocation>
        <location evidence="1">Nucleus</location>
    </subcellularLocation>
</comment>
<comment type="similarity">
    <text evidence="4">Belongs to the class I-like SAM-binding methyltransferase superfamily. C5-methyltransferase family.</text>
</comment>